<gene>
    <name evidence="1" type="primary">cmk</name>
    <name type="ordered locus">CPS_2334</name>
</gene>
<proteinExistence type="inferred from homology"/>
<sequence length="226" mass="24693">MQESTPVITIDGPSGAGKGTVARIVADQLGWHLLDSGAIYRVLAVAIQHHQLSLDDEEPLIPMAAHLDVQFEINSQGEAKVILEGENVTEIIRTEEVGGLASKVAAFPRVREALLRRQRAFSVSPGLIADGRDMGTVVFPKAPVKIFLTASAEERADRRFNQLKEKGIDVNIGRLLDDIRQRDERDQNRKVAPLIPAEGALTIDSTDISITEVVNKILMFANGKLT</sequence>
<feature type="chain" id="PRO_1000048212" description="Cytidylate kinase">
    <location>
        <begin position="1"/>
        <end position="226"/>
    </location>
</feature>
<feature type="binding site" evidence="1">
    <location>
        <begin position="12"/>
        <end position="20"/>
    </location>
    <ligand>
        <name>ATP</name>
        <dbReference type="ChEBI" id="CHEBI:30616"/>
    </ligand>
</feature>
<reference key="1">
    <citation type="journal article" date="2005" name="Proc. Natl. Acad. Sci. U.S.A.">
        <title>The psychrophilic lifestyle as revealed by the genome sequence of Colwellia psychrerythraea 34H through genomic and proteomic analyses.</title>
        <authorList>
            <person name="Methe B.A."/>
            <person name="Nelson K.E."/>
            <person name="Deming J.W."/>
            <person name="Momen B."/>
            <person name="Melamud E."/>
            <person name="Zhang X."/>
            <person name="Moult J."/>
            <person name="Madupu R."/>
            <person name="Nelson W.C."/>
            <person name="Dodson R.J."/>
            <person name="Brinkac L.M."/>
            <person name="Daugherty S.C."/>
            <person name="Durkin A.S."/>
            <person name="DeBoy R.T."/>
            <person name="Kolonay J.F."/>
            <person name="Sullivan S.A."/>
            <person name="Zhou L."/>
            <person name="Davidsen T.M."/>
            <person name="Wu M."/>
            <person name="Huston A.L."/>
            <person name="Lewis M."/>
            <person name="Weaver B."/>
            <person name="Weidman J.F."/>
            <person name="Khouri H."/>
            <person name="Utterback T.R."/>
            <person name="Feldblyum T.V."/>
            <person name="Fraser C.M."/>
        </authorList>
    </citation>
    <scope>NUCLEOTIDE SEQUENCE [LARGE SCALE GENOMIC DNA]</scope>
    <source>
        <strain>34H / ATCC BAA-681</strain>
    </source>
</reference>
<organism>
    <name type="scientific">Colwellia psychrerythraea (strain 34H / ATCC BAA-681)</name>
    <name type="common">Vibrio psychroerythus</name>
    <dbReference type="NCBI Taxonomy" id="167879"/>
    <lineage>
        <taxon>Bacteria</taxon>
        <taxon>Pseudomonadati</taxon>
        <taxon>Pseudomonadota</taxon>
        <taxon>Gammaproteobacteria</taxon>
        <taxon>Alteromonadales</taxon>
        <taxon>Colwelliaceae</taxon>
        <taxon>Colwellia</taxon>
    </lineage>
</organism>
<comment type="catalytic activity">
    <reaction evidence="1">
        <text>CMP + ATP = CDP + ADP</text>
        <dbReference type="Rhea" id="RHEA:11600"/>
        <dbReference type="ChEBI" id="CHEBI:30616"/>
        <dbReference type="ChEBI" id="CHEBI:58069"/>
        <dbReference type="ChEBI" id="CHEBI:60377"/>
        <dbReference type="ChEBI" id="CHEBI:456216"/>
        <dbReference type="EC" id="2.7.4.25"/>
    </reaction>
</comment>
<comment type="catalytic activity">
    <reaction evidence="1">
        <text>dCMP + ATP = dCDP + ADP</text>
        <dbReference type="Rhea" id="RHEA:25094"/>
        <dbReference type="ChEBI" id="CHEBI:30616"/>
        <dbReference type="ChEBI" id="CHEBI:57566"/>
        <dbReference type="ChEBI" id="CHEBI:58593"/>
        <dbReference type="ChEBI" id="CHEBI:456216"/>
        <dbReference type="EC" id="2.7.4.25"/>
    </reaction>
</comment>
<comment type="subcellular location">
    <subcellularLocation>
        <location evidence="1">Cytoplasm</location>
    </subcellularLocation>
</comment>
<comment type="similarity">
    <text evidence="1">Belongs to the cytidylate kinase family. Type 1 subfamily.</text>
</comment>
<dbReference type="EC" id="2.7.4.25" evidence="1"/>
<dbReference type="EMBL" id="CP000083">
    <property type="protein sequence ID" value="AAZ28833.1"/>
    <property type="molecule type" value="Genomic_DNA"/>
</dbReference>
<dbReference type="RefSeq" id="WP_011043148.1">
    <property type="nucleotide sequence ID" value="NC_003910.7"/>
</dbReference>
<dbReference type="SMR" id="Q482G4"/>
<dbReference type="STRING" id="167879.CPS_2334"/>
<dbReference type="KEGG" id="cps:CPS_2334"/>
<dbReference type="eggNOG" id="COG0283">
    <property type="taxonomic scope" value="Bacteria"/>
</dbReference>
<dbReference type="HOGENOM" id="CLU_079959_2_0_6"/>
<dbReference type="Proteomes" id="UP000000547">
    <property type="component" value="Chromosome"/>
</dbReference>
<dbReference type="GO" id="GO:0005829">
    <property type="term" value="C:cytosol"/>
    <property type="evidence" value="ECO:0007669"/>
    <property type="project" value="TreeGrafter"/>
</dbReference>
<dbReference type="GO" id="GO:0005524">
    <property type="term" value="F:ATP binding"/>
    <property type="evidence" value="ECO:0007669"/>
    <property type="project" value="UniProtKB-UniRule"/>
</dbReference>
<dbReference type="GO" id="GO:0036430">
    <property type="term" value="F:CMP kinase activity"/>
    <property type="evidence" value="ECO:0007669"/>
    <property type="project" value="RHEA"/>
</dbReference>
<dbReference type="GO" id="GO:0036431">
    <property type="term" value="F:dCMP kinase activity"/>
    <property type="evidence" value="ECO:0007669"/>
    <property type="project" value="RHEA"/>
</dbReference>
<dbReference type="GO" id="GO:0015949">
    <property type="term" value="P:nucleobase-containing small molecule interconversion"/>
    <property type="evidence" value="ECO:0007669"/>
    <property type="project" value="TreeGrafter"/>
</dbReference>
<dbReference type="GO" id="GO:0006220">
    <property type="term" value="P:pyrimidine nucleotide metabolic process"/>
    <property type="evidence" value="ECO:0007669"/>
    <property type="project" value="UniProtKB-UniRule"/>
</dbReference>
<dbReference type="CDD" id="cd02020">
    <property type="entry name" value="CMPK"/>
    <property type="match status" value="1"/>
</dbReference>
<dbReference type="FunFam" id="3.40.50.300:FF:000262">
    <property type="entry name" value="Cytidylate kinase"/>
    <property type="match status" value="1"/>
</dbReference>
<dbReference type="Gene3D" id="3.40.50.300">
    <property type="entry name" value="P-loop containing nucleotide triphosphate hydrolases"/>
    <property type="match status" value="1"/>
</dbReference>
<dbReference type="HAMAP" id="MF_00238">
    <property type="entry name" value="Cytidyl_kinase_type1"/>
    <property type="match status" value="1"/>
</dbReference>
<dbReference type="InterPro" id="IPR003136">
    <property type="entry name" value="Cytidylate_kin"/>
</dbReference>
<dbReference type="InterPro" id="IPR011994">
    <property type="entry name" value="Cytidylate_kinase_dom"/>
</dbReference>
<dbReference type="InterPro" id="IPR027417">
    <property type="entry name" value="P-loop_NTPase"/>
</dbReference>
<dbReference type="NCBIfam" id="TIGR00017">
    <property type="entry name" value="cmk"/>
    <property type="match status" value="1"/>
</dbReference>
<dbReference type="PANTHER" id="PTHR21299:SF2">
    <property type="entry name" value="CYTIDYLATE KINASE"/>
    <property type="match status" value="1"/>
</dbReference>
<dbReference type="PANTHER" id="PTHR21299">
    <property type="entry name" value="CYTIDYLATE KINASE/PANTOATE-BETA-ALANINE LIGASE"/>
    <property type="match status" value="1"/>
</dbReference>
<dbReference type="Pfam" id="PF02224">
    <property type="entry name" value="Cytidylate_kin"/>
    <property type="match status" value="1"/>
</dbReference>
<dbReference type="SUPFAM" id="SSF52540">
    <property type="entry name" value="P-loop containing nucleoside triphosphate hydrolases"/>
    <property type="match status" value="1"/>
</dbReference>
<accession>Q482G4</accession>
<keyword id="KW-0067">ATP-binding</keyword>
<keyword id="KW-0963">Cytoplasm</keyword>
<keyword id="KW-0418">Kinase</keyword>
<keyword id="KW-0547">Nucleotide-binding</keyword>
<keyword id="KW-0808">Transferase</keyword>
<protein>
    <recommendedName>
        <fullName evidence="1">Cytidylate kinase</fullName>
        <shortName evidence="1">CK</shortName>
        <ecNumber evidence="1">2.7.4.25</ecNumber>
    </recommendedName>
    <alternativeName>
        <fullName evidence="1">Cytidine monophosphate kinase</fullName>
        <shortName evidence="1">CMP kinase</shortName>
    </alternativeName>
</protein>
<evidence type="ECO:0000255" key="1">
    <source>
        <dbReference type="HAMAP-Rule" id="MF_00238"/>
    </source>
</evidence>
<name>KCY_COLP3</name>